<reference key="1">
    <citation type="journal article" date="2000" name="Mol. Cell. Neurosci.">
        <title>Expression of neurexin I alpha splice variants in sympathetic neurons: selective changes during differentiation and in response to neurotrophins.</title>
        <authorList>
            <person name="Patzke H."/>
            <person name="Ernsberger U."/>
        </authorList>
    </citation>
    <scope>NUCLEOTIDE SEQUENCE [MRNA] (ISOFORMS 1A; 2A; 3A; 4A; 5A; 6A; 7A; 8A AND 9A)</scope>
    <source>
        <tissue>Sympathetic ganglion</tissue>
    </source>
</reference>
<organism>
    <name type="scientific">Gallus gallus</name>
    <name type="common">Chicken</name>
    <dbReference type="NCBI Taxonomy" id="9031"/>
    <lineage>
        <taxon>Eukaryota</taxon>
        <taxon>Metazoa</taxon>
        <taxon>Chordata</taxon>
        <taxon>Craniata</taxon>
        <taxon>Vertebrata</taxon>
        <taxon>Euteleostomi</taxon>
        <taxon>Archelosauria</taxon>
        <taxon>Archosauria</taxon>
        <taxon>Dinosauria</taxon>
        <taxon>Saurischia</taxon>
        <taxon>Theropoda</taxon>
        <taxon>Coelurosauria</taxon>
        <taxon>Aves</taxon>
        <taxon>Neognathae</taxon>
        <taxon>Galloanserae</taxon>
        <taxon>Galliformes</taxon>
        <taxon>Phasianidae</taxon>
        <taxon>Phasianinae</taxon>
        <taxon>Gallus</taxon>
    </lineage>
</organism>
<evidence type="ECO:0000250" key="1"/>
<evidence type="ECO:0000255" key="2"/>
<evidence type="ECO:0000255" key="3">
    <source>
        <dbReference type="PROSITE-ProRule" id="PRU00076"/>
    </source>
</evidence>
<evidence type="ECO:0000255" key="4">
    <source>
        <dbReference type="PROSITE-ProRule" id="PRU00122"/>
    </source>
</evidence>
<evidence type="ECO:0000256" key="5">
    <source>
        <dbReference type="SAM" id="MobiDB-lite"/>
    </source>
</evidence>
<evidence type="ECO:0000303" key="6">
    <source>
    </source>
</evidence>
<evidence type="ECO:0000305" key="7"/>
<keyword id="KW-0877">Alternative promoter usage</keyword>
<keyword id="KW-0025">Alternative splicing</keyword>
<keyword id="KW-0106">Calcium</keyword>
<keyword id="KW-0130">Cell adhesion</keyword>
<keyword id="KW-1015">Disulfide bond</keyword>
<keyword id="KW-0245">EGF-like domain</keyword>
<keyword id="KW-0325">Glycoprotein</keyword>
<keyword id="KW-0472">Membrane</keyword>
<keyword id="KW-0479">Metal-binding</keyword>
<keyword id="KW-1185">Reference proteome</keyword>
<keyword id="KW-0677">Repeat</keyword>
<keyword id="KW-0812">Transmembrane</keyword>
<keyword id="KW-1133">Transmembrane helix</keyword>
<comment type="function">
    <text>Neuronal cell surface protein that may be involved in cell recognition and cell adhesion. May mediate intracellular signaling.</text>
</comment>
<comment type="subunit">
    <text evidence="1">The cytoplasmic C-terminal region binds to CASK. The laminin G-like domain 1 binds to NXPH1. Specific isoforms bind to alpha-dystroglycan and to alpha-latrotoxin (By similarity).</text>
</comment>
<comment type="subcellular location">
    <subcellularLocation>
        <location evidence="7">Membrane</location>
        <topology evidence="7">Single-pass type I membrane protein</topology>
    </subcellularLocation>
</comment>
<comment type="alternative products">
    <event type="alternative promoter"/>
    <event type="alternative splicing"/>
    <isoform>
        <id>Q9DDD0-1</id>
        <name>1a</name>
        <name>Alpha</name>
        <sequence type="displayed"/>
    </isoform>
    <isoform>
        <id>Q9DDD0-2</id>
        <name>2a</name>
        <name>Alpha-1,2</name>
        <sequence type="described" ref="VSP_003500"/>
    </isoform>
    <isoform>
        <id>Q9DDD0-3</id>
        <name>3a</name>
        <name>Alpha-1,3</name>
        <sequence type="described" ref="VSP_003499"/>
    </isoform>
    <isoform>
        <id>Q9DDD0-4</id>
        <name>4a</name>
        <name>Alpha-1,4</name>
        <sequence type="described" ref="VSP_003499 VSP_003500"/>
    </isoform>
    <isoform>
        <id>Q9DDD0-5</id>
        <name>5a</name>
        <name>Alpha-1,5</name>
        <sequence type="described" ref="VSP_003498"/>
    </isoform>
    <isoform>
        <id>Q9DDD0-6</id>
        <name>6a</name>
        <name>Alpha-2,5</name>
        <sequence type="described" ref="VSP_003502"/>
    </isoform>
    <isoform>
        <id>Q9DDD0-7</id>
        <name>7a</name>
        <name>Alpha-2,8</name>
        <sequence type="described" ref="VSP_003501"/>
    </isoform>
    <isoform>
        <id>Q9DDD0-8</id>
        <name>8a</name>
        <name>Alpha-4,10</name>
        <sequence type="described" ref="VSP_003503"/>
    </isoform>
    <isoform>
        <id>Q9DDD0-9</id>
        <name>9a</name>
        <name>Alpha-5,13</name>
        <sequence type="described" ref="VSP_003504"/>
    </isoform>
    <isoform>
        <id>D0PRN2-1</id>
        <name>1b</name>
        <sequence type="external"/>
    </isoform>
    <text>A number of isoforms, beta-type and alpha-type are produced by alternative promoter usage. Beta-type isoforms differ from alpha-type isoforms in their N-terminus. Additional isoforms seem to exist. There are probably more than 60 isoforms. There is a combination of five alternatively spliced domains at sites 1 to 5, each consisting of modular sequences that seem to be used independently. Experimental confirmation may be lacking for some isoforms.</text>
</comment>
<comment type="PTM">
    <text evidence="1">N- and O-glycosylated.</text>
</comment>
<comment type="similarity">
    <text evidence="7">Belongs to the neurexin family.</text>
</comment>
<gene>
    <name type="primary">NRXN1</name>
</gene>
<feature type="chain" id="PRO_0000220496" description="Neurexin-1">
    <location>
        <begin position="1" status="less than"/>
        <end position="1363"/>
    </location>
</feature>
<feature type="topological domain" description="Extracellular" evidence="2">
    <location>
        <begin position="1" status="less than"/>
        <end position="1287"/>
    </location>
</feature>
<feature type="transmembrane region" description="Helical" evidence="2">
    <location>
        <begin position="1288"/>
        <end position="1308"/>
    </location>
</feature>
<feature type="topological domain" description="Cytoplasmic" evidence="2">
    <location>
        <begin position="1309"/>
        <end position="1363"/>
    </location>
</feature>
<feature type="domain" description="EGF-like 1" evidence="3">
    <location>
        <begin position="67"/>
        <end position="105"/>
    </location>
</feature>
<feature type="domain" description="Laminin G-like 1" evidence="4">
    <location>
        <begin position="132"/>
        <end position="329"/>
    </location>
</feature>
<feature type="domain" description="Laminin G-like 2" evidence="4">
    <location>
        <begin position="336"/>
        <end position="528"/>
    </location>
</feature>
<feature type="domain" description="EGF-like 2" evidence="3">
    <location>
        <begin position="532"/>
        <end position="569"/>
    </location>
</feature>
<feature type="domain" description="Laminin G-like 3" evidence="4">
    <location>
        <begin position="574"/>
        <end position="747"/>
    </location>
</feature>
<feature type="domain" description="Laminin G-like 4" evidence="4">
    <location>
        <begin position="761"/>
        <end position="936"/>
    </location>
</feature>
<feature type="domain" description="EGF-like 3" evidence="3">
    <location>
        <begin position="939"/>
        <end position="976"/>
    </location>
</feature>
<feature type="domain" description="Laminin G-like 5" evidence="4">
    <location>
        <begin position="982"/>
        <end position="1180"/>
    </location>
</feature>
<feature type="region of interest" description="Disordered" evidence="5">
    <location>
        <begin position="1244"/>
        <end position="1280"/>
    </location>
</feature>
<feature type="region of interest" description="Disordered" evidence="5">
    <location>
        <begin position="1330"/>
        <end position="1363"/>
    </location>
</feature>
<feature type="binding site" evidence="1">
    <location>
        <position position="178"/>
    </location>
    <ligand>
        <name>Ca(2+)</name>
        <dbReference type="ChEBI" id="CHEBI:29108"/>
    </ligand>
</feature>
<feature type="binding site" evidence="1">
    <location>
        <position position="195"/>
    </location>
    <ligand>
        <name>Ca(2+)</name>
        <dbReference type="ChEBI" id="CHEBI:29108"/>
    </ligand>
</feature>
<feature type="binding site" evidence="1">
    <location>
        <position position="263"/>
    </location>
    <ligand>
        <name>Ca(2+)</name>
        <dbReference type="ChEBI" id="CHEBI:29108"/>
    </ligand>
</feature>
<feature type="glycosylation site" description="N-linked (GlcNAc...) asparagine" evidence="2">
    <location>
        <position position="49"/>
    </location>
</feature>
<feature type="glycosylation site" description="N-linked (GlcNAc...) asparagine" evidence="2">
    <location>
        <position position="646"/>
    </location>
</feature>
<feature type="glycosylation site" description="N-linked (GlcNAc...) asparagine" evidence="2">
    <location>
        <position position="1079"/>
    </location>
</feature>
<feature type="disulfide bond" evidence="1">
    <location>
        <begin position="71"/>
        <end position="83"/>
    </location>
</feature>
<feature type="disulfide bond" evidence="1">
    <location>
        <begin position="77"/>
        <end position="92"/>
    </location>
</feature>
<feature type="disulfide bond" evidence="1">
    <location>
        <begin position="94"/>
        <end position="104"/>
    </location>
</feature>
<feature type="disulfide bond" evidence="1">
    <location>
        <begin position="293"/>
        <end position="329"/>
    </location>
</feature>
<feature type="disulfide bond" evidence="1">
    <location>
        <begin position="499"/>
        <end position="528"/>
    </location>
</feature>
<feature type="disulfide bond" evidence="1">
    <location>
        <begin position="536"/>
        <end position="547"/>
    </location>
</feature>
<feature type="disulfide bond" evidence="1">
    <location>
        <begin position="541"/>
        <end position="556"/>
    </location>
</feature>
<feature type="disulfide bond" evidence="1">
    <location>
        <begin position="558"/>
        <end position="568"/>
    </location>
</feature>
<feature type="disulfide bond" evidence="1">
    <location>
        <begin position="908"/>
        <end position="936"/>
    </location>
</feature>
<feature type="disulfide bond" evidence="1">
    <location>
        <begin position="943"/>
        <end position="954"/>
    </location>
</feature>
<feature type="disulfide bond" evidence="1">
    <location>
        <begin position="948"/>
        <end position="963"/>
    </location>
</feature>
<feature type="disulfide bond" evidence="1">
    <location>
        <begin position="965"/>
        <end position="975"/>
    </location>
</feature>
<feature type="splice variant" id="VSP_003498" description="In isoform 5a." evidence="6">
    <location>
        <begin position="106"/>
        <end position="126"/>
    </location>
</feature>
<feature type="splice variant" id="VSP_003499" description="In isoform 3a and isoform 4a." evidence="6">
    <location>
        <begin position="106"/>
        <end position="111"/>
    </location>
</feature>
<feature type="splice variant" id="VSP_003500" description="In isoform 2a and isoform 4a." evidence="6">
    <location>
        <begin position="123"/>
        <end position="126"/>
    </location>
</feature>
<feature type="splice variant" id="VSP_003501" description="In isoform 7a." evidence="6">
    <location>
        <begin position="228"/>
        <end position="242"/>
    </location>
</feature>
<feature type="splice variant" id="VSP_003502" description="In isoform 6a." evidence="6">
    <location>
        <begin position="236"/>
        <end position="242"/>
    </location>
</feature>
<feature type="splice variant" id="VSP_003503" description="In isoform 8a." evidence="6">
    <location>
        <begin position="1096"/>
        <end position="1125"/>
    </location>
</feature>
<feature type="splice variant" id="VSP_003504" description="In isoform 9a." evidence="6">
    <location>
        <begin position="1259"/>
        <end position="1261"/>
    </location>
</feature>
<feature type="non-terminal residue">
    <location>
        <position position="1"/>
    </location>
</feature>
<sequence length="1363" mass="150076">SKRRDMTVFSGLFLGGLPPELRSATLKLTLSSVKDREPFKGWITDVRVNYTQTSPVESQEVRLDDEQSRLCAREDVCLNGGVCSVLNDQAVCDCSQTGFRGKDCSEEDNYVEGLAHLMMGDQGKSKGKEEYIATFKGSEYFCYDLSQNPIQSSSDEITLSFKTLQRNGLMLHTGKSADYVNLALKNGAVSLVINLGSGAFEALVEPVNGKFNDNAWHDVKVTRNLRQHSGIGHAMVNKLHCSVTISVDGILTTTGYTQEDYTMLGSDDFFYVGGSPSTADLPGSPVSNNFMGCLKEVVYKNNDVRLELSRLAKQGDPKMKIHGVVAFKCENVATLDPITFETPESFISLPKWNAKKTGSISFDFRTTEPNGLILFSHGKPRHQKDAKHPQMVKVDFFAIEMLDGHLYLLLDMGSGTIKIKALQKKVNDGEWYHVDFQRDGRSGTISVNTLRTPYTAPGESEILDLDDDLYLGGLPENKAGLVFPTEVWTALLNYGYVGCIRDLFIDGQSKDIRQMAEIQSTAGVKPSCSRETAKPCLSNPCKNNGVCRDGWNRYVCDCSGTGYLGRSCEREATILSYDGSMFMKIQLPVVMHTEAEDVSLRFRSQRAYGILMATTSRESADTLRLELDAGRVKLTVNLDCIRINCNSSKGPETLFAGYNLNDNEWHTVRVVRRGKSLKLMVDDQQAMTGQMAGDHTRLEFHNIETGIITERRYLSSVPSNFIGHLQSLTFNGMAYIDLCKNGDIDYCELNARFGFRNIIADPVTFKTKASYVALATLQAYTSMHLFFQFKTTSLDGLILYNSGDGNDFIVVELVKGYLHYVFDLGNGANLIKGSSNKPLNDNQWHNVMISRDTNNLHTVKIDTKITTQSTAGARNLDLKSDLYIGGVAKEMYKSLPKLVHAKEGFQGCLASVDLNGRLPDLISDALFCNGQIERGCEGPSTTCQEDSCANQGVCLQQWDGFSCDCSMTSFSGPLCNDPGTTYIFSKGGGQITYTWPPNDRPSTRADRLAIGFSTVQKEAVLVRVDSSTGLGDYLELHIHQGKIGVKFNVGTDDIAIEEINAIINDGKYHVVRFTRSGGNATLQVDNWPVIERYPAGNNDNERLAIARQRIPYRLGRVVDEWLLDKGRQLTIFNSQATIKIGGKERGHPFQGQLSGLYYNGLKVLNMAAENDANIVIEGNVRLVGEVPSSMTTESTATAMQSEMSTSVMETTTTLATSTARRGKAPTKEPIGQTTDDILVASAECPSDDEDIDPCEPSSGGLANPTRAGGGREYPGSSEVIRESSSTTGMVVGIVAAAALCILILLYAMYKYRNRDEGSYHVDESRNYISNSAQSNGAVIKEKQPNSAKSSNKNKKNKDKEYYV</sequence>
<accession>Q9DDD0</accession>
<name>NRX1A_CHICK</name>
<dbReference type="EMBL" id="AJ300473">
    <property type="protein sequence ID" value="CAC17606.1"/>
    <property type="molecule type" value="mRNA"/>
</dbReference>
<dbReference type="SMR" id="Q9DDD0"/>
<dbReference type="FunCoup" id="Q9DDD0">
    <property type="interactions" value="380"/>
</dbReference>
<dbReference type="STRING" id="9031.ENSGALP00000052216"/>
<dbReference type="GlyCosmos" id="Q9DDD0">
    <property type="glycosylation" value="3 sites, No reported glycans"/>
</dbReference>
<dbReference type="GlyGen" id="Q9DDD0">
    <property type="glycosylation" value="3 sites"/>
</dbReference>
<dbReference type="PaxDb" id="9031-ENSGALP00000014816"/>
<dbReference type="VEuPathDB" id="HostDB:geneid_395398"/>
<dbReference type="eggNOG" id="KOG3514">
    <property type="taxonomic scope" value="Eukaryota"/>
</dbReference>
<dbReference type="InParanoid" id="Q9DDD0"/>
<dbReference type="OrthoDB" id="6275838at2759"/>
<dbReference type="PhylomeDB" id="Q9DDD0"/>
<dbReference type="Proteomes" id="UP000000539">
    <property type="component" value="Unassembled WGS sequence"/>
</dbReference>
<dbReference type="GO" id="GO:0016020">
    <property type="term" value="C:membrane"/>
    <property type="evidence" value="ECO:0007669"/>
    <property type="project" value="UniProtKB-SubCell"/>
</dbReference>
<dbReference type="GO" id="GO:0046872">
    <property type="term" value="F:metal ion binding"/>
    <property type="evidence" value="ECO:0007669"/>
    <property type="project" value="UniProtKB-KW"/>
</dbReference>
<dbReference type="GO" id="GO:0007155">
    <property type="term" value="P:cell adhesion"/>
    <property type="evidence" value="ECO:0007669"/>
    <property type="project" value="UniProtKB-KW"/>
</dbReference>
<dbReference type="CDD" id="cd00054">
    <property type="entry name" value="EGF_CA"/>
    <property type="match status" value="2"/>
</dbReference>
<dbReference type="CDD" id="cd00110">
    <property type="entry name" value="LamG"/>
    <property type="match status" value="5"/>
</dbReference>
<dbReference type="FunFam" id="2.10.25.10:FF:000015">
    <property type="entry name" value="neurexin-1 isoform X1"/>
    <property type="match status" value="1"/>
</dbReference>
<dbReference type="FunFam" id="2.10.25.10:FF:000029">
    <property type="entry name" value="neurexin-1 isoform X1"/>
    <property type="match status" value="1"/>
</dbReference>
<dbReference type="FunFam" id="2.60.120.200:FF:000001">
    <property type="entry name" value="neurexin-1 isoform X1"/>
    <property type="match status" value="1"/>
</dbReference>
<dbReference type="FunFam" id="2.60.120.200:FF:000003">
    <property type="entry name" value="neurexin-1 isoform X1"/>
    <property type="match status" value="1"/>
</dbReference>
<dbReference type="FunFam" id="2.60.120.200:FF:000004">
    <property type="entry name" value="neurexin-1 isoform X1"/>
    <property type="match status" value="1"/>
</dbReference>
<dbReference type="FunFam" id="2.60.120.200:FF:000005">
    <property type="entry name" value="neurexin-1 isoform X1"/>
    <property type="match status" value="1"/>
</dbReference>
<dbReference type="FunFam" id="2.60.120.200:FF:000007">
    <property type="entry name" value="neurexin-1 isoform X1"/>
    <property type="match status" value="1"/>
</dbReference>
<dbReference type="Gene3D" id="2.60.120.200">
    <property type="match status" value="5"/>
</dbReference>
<dbReference type="Gene3D" id="2.10.25.10">
    <property type="entry name" value="Laminin"/>
    <property type="match status" value="3"/>
</dbReference>
<dbReference type="InterPro" id="IPR013320">
    <property type="entry name" value="ConA-like_dom_sf"/>
</dbReference>
<dbReference type="InterPro" id="IPR000742">
    <property type="entry name" value="EGF-like_dom"/>
</dbReference>
<dbReference type="InterPro" id="IPR000152">
    <property type="entry name" value="EGF-type_Asp/Asn_hydroxyl_site"/>
</dbReference>
<dbReference type="InterPro" id="IPR001791">
    <property type="entry name" value="Laminin_G"/>
</dbReference>
<dbReference type="InterPro" id="IPR003585">
    <property type="entry name" value="Neurexin-like"/>
</dbReference>
<dbReference type="InterPro" id="IPR050372">
    <property type="entry name" value="Neurexin-related_CASP"/>
</dbReference>
<dbReference type="InterPro" id="IPR027789">
    <property type="entry name" value="Syndecan/Neurexin_dom"/>
</dbReference>
<dbReference type="PANTHER" id="PTHR15036">
    <property type="entry name" value="PIKACHURIN-LIKE PROTEIN"/>
    <property type="match status" value="1"/>
</dbReference>
<dbReference type="PANTHER" id="PTHR15036:SF85">
    <property type="entry name" value="SP2353, ISOFORM A"/>
    <property type="match status" value="1"/>
</dbReference>
<dbReference type="Pfam" id="PF00008">
    <property type="entry name" value="EGF"/>
    <property type="match status" value="1"/>
</dbReference>
<dbReference type="Pfam" id="PF02210">
    <property type="entry name" value="Laminin_G_2"/>
    <property type="match status" value="5"/>
</dbReference>
<dbReference type="Pfam" id="PF01034">
    <property type="entry name" value="Syndecan"/>
    <property type="match status" value="1"/>
</dbReference>
<dbReference type="SMART" id="SM00294">
    <property type="entry name" value="4.1m"/>
    <property type="match status" value="1"/>
</dbReference>
<dbReference type="SMART" id="SM00181">
    <property type="entry name" value="EGF"/>
    <property type="match status" value="3"/>
</dbReference>
<dbReference type="SMART" id="SM00282">
    <property type="entry name" value="LamG"/>
    <property type="match status" value="5"/>
</dbReference>
<dbReference type="SUPFAM" id="SSF49899">
    <property type="entry name" value="Concanavalin A-like lectins/glucanases"/>
    <property type="match status" value="5"/>
</dbReference>
<dbReference type="PROSITE" id="PS00010">
    <property type="entry name" value="ASX_HYDROXYL"/>
    <property type="match status" value="1"/>
</dbReference>
<dbReference type="PROSITE" id="PS50026">
    <property type="entry name" value="EGF_3"/>
    <property type="match status" value="3"/>
</dbReference>
<dbReference type="PROSITE" id="PS50025">
    <property type="entry name" value="LAM_G_DOMAIN"/>
    <property type="match status" value="5"/>
</dbReference>
<protein>
    <recommendedName>
        <fullName>Neurexin-1</fullName>
    </recommendedName>
    <alternativeName>
        <fullName>Neurexin I-alpha</fullName>
    </alternativeName>
    <alternativeName>
        <fullName>Neurexin-1-alpha</fullName>
    </alternativeName>
</protein>
<proteinExistence type="evidence at transcript level"/>